<organism>
    <name type="scientific">Trichodesmium erythraeum (strain IMS101)</name>
    <dbReference type="NCBI Taxonomy" id="203124"/>
    <lineage>
        <taxon>Bacteria</taxon>
        <taxon>Bacillati</taxon>
        <taxon>Cyanobacteriota</taxon>
        <taxon>Cyanophyceae</taxon>
        <taxon>Oscillatoriophycideae</taxon>
        <taxon>Oscillatoriales</taxon>
        <taxon>Microcoleaceae</taxon>
        <taxon>Trichodesmium</taxon>
    </lineage>
</organism>
<name>RS13_TRIEI</name>
<protein>
    <recommendedName>
        <fullName evidence="1">Small ribosomal subunit protein uS13</fullName>
    </recommendedName>
    <alternativeName>
        <fullName evidence="3">30S ribosomal protein S13</fullName>
    </alternativeName>
</protein>
<feature type="chain" id="PRO_0000306739" description="Small ribosomal subunit protein uS13">
    <location>
        <begin position="1"/>
        <end position="127"/>
    </location>
</feature>
<feature type="region of interest" description="Disordered" evidence="2">
    <location>
        <begin position="92"/>
        <end position="127"/>
    </location>
</feature>
<feature type="compositionally biased region" description="Basic residues" evidence="2">
    <location>
        <begin position="101"/>
        <end position="127"/>
    </location>
</feature>
<reference key="1">
    <citation type="journal article" date="2015" name="Proc. Natl. Acad. Sci. U.S.A.">
        <title>Trichodesmium genome maintains abundant, widespread noncoding DNA in situ, despite oligotrophic lifestyle.</title>
        <authorList>
            <person name="Walworth N."/>
            <person name="Pfreundt U."/>
            <person name="Nelson W.C."/>
            <person name="Mincer T."/>
            <person name="Heidelberg J.F."/>
            <person name="Fu F."/>
            <person name="Waterbury J.B."/>
            <person name="Glavina del Rio T."/>
            <person name="Goodwin L."/>
            <person name="Kyrpides N.C."/>
            <person name="Land M.L."/>
            <person name="Woyke T."/>
            <person name="Hutchins D.A."/>
            <person name="Hess W.R."/>
            <person name="Webb E.A."/>
        </authorList>
    </citation>
    <scope>NUCLEOTIDE SEQUENCE [LARGE SCALE GENOMIC DNA]</scope>
    <source>
        <strain>IMS101</strain>
    </source>
</reference>
<proteinExistence type="inferred from homology"/>
<keyword id="KW-0687">Ribonucleoprotein</keyword>
<keyword id="KW-0689">Ribosomal protein</keyword>
<keyword id="KW-0694">RNA-binding</keyword>
<keyword id="KW-0699">rRNA-binding</keyword>
<keyword id="KW-0820">tRNA-binding</keyword>
<comment type="function">
    <text evidence="1">Located at the top of the head of the 30S subunit, it contacts several helices of the 16S rRNA. In the 70S ribosome it contacts the 23S rRNA (bridge B1a) and protein L5 of the 50S subunit (bridge B1b), connecting the 2 subunits; these bridges are implicated in subunit movement. Contacts the tRNAs in the A and P-sites.</text>
</comment>
<comment type="subunit">
    <text evidence="1">Part of the 30S ribosomal subunit. Forms a loose heterodimer with protein S19. Forms two bridges to the 50S subunit in the 70S ribosome.</text>
</comment>
<comment type="similarity">
    <text evidence="1">Belongs to the universal ribosomal protein uS13 family.</text>
</comment>
<evidence type="ECO:0000255" key="1">
    <source>
        <dbReference type="HAMAP-Rule" id="MF_01315"/>
    </source>
</evidence>
<evidence type="ECO:0000256" key="2">
    <source>
        <dbReference type="SAM" id="MobiDB-lite"/>
    </source>
</evidence>
<evidence type="ECO:0000305" key="3"/>
<dbReference type="EMBL" id="CP000393">
    <property type="protein sequence ID" value="ABG52145.1"/>
    <property type="molecule type" value="Genomic_DNA"/>
</dbReference>
<dbReference type="RefSeq" id="WP_011612501.1">
    <property type="nucleotide sequence ID" value="NC_008312.1"/>
</dbReference>
<dbReference type="SMR" id="Q110C9"/>
<dbReference type="STRING" id="203124.Tery_2990"/>
<dbReference type="KEGG" id="ter:Tery_2990"/>
<dbReference type="eggNOG" id="COG0099">
    <property type="taxonomic scope" value="Bacteria"/>
</dbReference>
<dbReference type="HOGENOM" id="CLU_103849_1_2_3"/>
<dbReference type="OrthoDB" id="9803610at2"/>
<dbReference type="GO" id="GO:0005829">
    <property type="term" value="C:cytosol"/>
    <property type="evidence" value="ECO:0007669"/>
    <property type="project" value="TreeGrafter"/>
</dbReference>
<dbReference type="GO" id="GO:0015935">
    <property type="term" value="C:small ribosomal subunit"/>
    <property type="evidence" value="ECO:0007669"/>
    <property type="project" value="TreeGrafter"/>
</dbReference>
<dbReference type="GO" id="GO:0019843">
    <property type="term" value="F:rRNA binding"/>
    <property type="evidence" value="ECO:0007669"/>
    <property type="project" value="UniProtKB-UniRule"/>
</dbReference>
<dbReference type="GO" id="GO:0003735">
    <property type="term" value="F:structural constituent of ribosome"/>
    <property type="evidence" value="ECO:0007669"/>
    <property type="project" value="InterPro"/>
</dbReference>
<dbReference type="GO" id="GO:0000049">
    <property type="term" value="F:tRNA binding"/>
    <property type="evidence" value="ECO:0007669"/>
    <property type="project" value="UniProtKB-UniRule"/>
</dbReference>
<dbReference type="GO" id="GO:0006412">
    <property type="term" value="P:translation"/>
    <property type="evidence" value="ECO:0007669"/>
    <property type="project" value="UniProtKB-UniRule"/>
</dbReference>
<dbReference type="FunFam" id="1.10.8.50:FF:000001">
    <property type="entry name" value="30S ribosomal protein S13"/>
    <property type="match status" value="1"/>
</dbReference>
<dbReference type="FunFam" id="4.10.910.10:FF:000001">
    <property type="entry name" value="30S ribosomal protein S13"/>
    <property type="match status" value="1"/>
</dbReference>
<dbReference type="Gene3D" id="1.10.8.50">
    <property type="match status" value="1"/>
</dbReference>
<dbReference type="Gene3D" id="4.10.910.10">
    <property type="entry name" value="30s ribosomal protein s13, domain 2"/>
    <property type="match status" value="1"/>
</dbReference>
<dbReference type="HAMAP" id="MF_01315">
    <property type="entry name" value="Ribosomal_uS13"/>
    <property type="match status" value="1"/>
</dbReference>
<dbReference type="InterPro" id="IPR027437">
    <property type="entry name" value="Rbsml_uS13_C"/>
</dbReference>
<dbReference type="InterPro" id="IPR001892">
    <property type="entry name" value="Ribosomal_uS13"/>
</dbReference>
<dbReference type="InterPro" id="IPR010979">
    <property type="entry name" value="Ribosomal_uS13-like_H2TH"/>
</dbReference>
<dbReference type="InterPro" id="IPR019980">
    <property type="entry name" value="Ribosomal_uS13_bac-type"/>
</dbReference>
<dbReference type="InterPro" id="IPR018269">
    <property type="entry name" value="Ribosomal_uS13_CS"/>
</dbReference>
<dbReference type="NCBIfam" id="TIGR03631">
    <property type="entry name" value="uS13_bact"/>
    <property type="match status" value="1"/>
</dbReference>
<dbReference type="PANTHER" id="PTHR10871">
    <property type="entry name" value="30S RIBOSOMAL PROTEIN S13/40S RIBOSOMAL PROTEIN S18"/>
    <property type="match status" value="1"/>
</dbReference>
<dbReference type="PANTHER" id="PTHR10871:SF1">
    <property type="entry name" value="SMALL RIBOSOMAL SUBUNIT PROTEIN US13M"/>
    <property type="match status" value="1"/>
</dbReference>
<dbReference type="Pfam" id="PF00416">
    <property type="entry name" value="Ribosomal_S13"/>
    <property type="match status" value="1"/>
</dbReference>
<dbReference type="PIRSF" id="PIRSF002134">
    <property type="entry name" value="Ribosomal_S13"/>
    <property type="match status" value="1"/>
</dbReference>
<dbReference type="SUPFAM" id="SSF46946">
    <property type="entry name" value="S13-like H2TH domain"/>
    <property type="match status" value="1"/>
</dbReference>
<dbReference type="PROSITE" id="PS00646">
    <property type="entry name" value="RIBOSOMAL_S13_1"/>
    <property type="match status" value="1"/>
</dbReference>
<dbReference type="PROSITE" id="PS50159">
    <property type="entry name" value="RIBOSOMAL_S13_2"/>
    <property type="match status" value="1"/>
</dbReference>
<sequence length="127" mass="14380">MARIAGVDLPRDKRIEIGLTYIYGIGLSRSQEILAETDVNPDTRVKDLSDADVAAIRSEVQNNYEVEGDLRRLEAMSIKRLMDIGTYRGRRHRMGLPVRGQRTRTNARTRRGVRRTVAGKKKASAKK</sequence>
<accession>Q110C9</accession>
<gene>
    <name evidence="1" type="primary">rpsM</name>
    <name evidence="1" type="synonym">rps13</name>
    <name type="ordered locus">Tery_2990</name>
</gene>